<sequence>MEIRAAEISKVIKDQIASFGTEAQVSEVGSVLSVGDGIARIHGLDKVQAGEMVEFSNGVKGMALNLEADNVGVVIFGSDSEIKEGDVVKRTGTIVDVPVGKGLLGRVVDALGNPIDGKGPIVDATRQRVEVKAPGIIPRKSVHEPVQTGLKAIDALVPVGRGQRELIIGDRQTGKTAVAIDTFINQKAVNAGTDEGKKLYCIYVAVGQKRSTVAQIVRQLEENGAMEYSIVVAATASEPAPLQYLAPYTGATMGEFFRDNGMHAVIVYDDLSKQAVAYRQMSLLLRRPPGREAYPGDVFYLHSRLLERAAKMNDENGAGSLTALPIIETQAGDVSAYIPTNVISITDGQIFLETGLFYQGIRPAINVGLSVSRVGSSAQTKAMKKVAGSIKLELAQYREMAAFAQFGSDLDASTQKLLNRGARLTELLKQPQFSPLGFEEQTCVIFAGTQGYLDAVPVNRVTEYEAELLSFLRSQHADLLGLIRDTKDLGDEAKGKLVAALDAFAKQFA</sequence>
<proteinExistence type="inferred from homology"/>
<name>ATPA_NOVAD</name>
<dbReference type="EC" id="7.1.2.2" evidence="1"/>
<dbReference type="EMBL" id="CP000248">
    <property type="protein sequence ID" value="ABD26836.1"/>
    <property type="molecule type" value="Genomic_DNA"/>
</dbReference>
<dbReference type="RefSeq" id="WP_011446042.1">
    <property type="nucleotide sequence ID" value="NC_007794.1"/>
</dbReference>
<dbReference type="SMR" id="Q2G5N7"/>
<dbReference type="STRING" id="279238.Saro_2400"/>
<dbReference type="KEGG" id="nar:Saro_2400"/>
<dbReference type="eggNOG" id="COG0056">
    <property type="taxonomic scope" value="Bacteria"/>
</dbReference>
<dbReference type="HOGENOM" id="CLU_010091_2_1_5"/>
<dbReference type="Proteomes" id="UP000009134">
    <property type="component" value="Chromosome"/>
</dbReference>
<dbReference type="GO" id="GO:0005886">
    <property type="term" value="C:plasma membrane"/>
    <property type="evidence" value="ECO:0007669"/>
    <property type="project" value="UniProtKB-SubCell"/>
</dbReference>
<dbReference type="GO" id="GO:0045259">
    <property type="term" value="C:proton-transporting ATP synthase complex"/>
    <property type="evidence" value="ECO:0007669"/>
    <property type="project" value="UniProtKB-KW"/>
</dbReference>
<dbReference type="GO" id="GO:0043531">
    <property type="term" value="F:ADP binding"/>
    <property type="evidence" value="ECO:0007669"/>
    <property type="project" value="TreeGrafter"/>
</dbReference>
<dbReference type="GO" id="GO:0005524">
    <property type="term" value="F:ATP binding"/>
    <property type="evidence" value="ECO:0007669"/>
    <property type="project" value="UniProtKB-UniRule"/>
</dbReference>
<dbReference type="GO" id="GO:0046933">
    <property type="term" value="F:proton-transporting ATP synthase activity, rotational mechanism"/>
    <property type="evidence" value="ECO:0007669"/>
    <property type="project" value="UniProtKB-UniRule"/>
</dbReference>
<dbReference type="CDD" id="cd18113">
    <property type="entry name" value="ATP-synt_F1_alpha_C"/>
    <property type="match status" value="1"/>
</dbReference>
<dbReference type="CDD" id="cd18116">
    <property type="entry name" value="ATP-synt_F1_alpha_N"/>
    <property type="match status" value="1"/>
</dbReference>
<dbReference type="CDD" id="cd01132">
    <property type="entry name" value="F1-ATPase_alpha_CD"/>
    <property type="match status" value="1"/>
</dbReference>
<dbReference type="FunFam" id="1.20.150.20:FF:000001">
    <property type="entry name" value="ATP synthase subunit alpha"/>
    <property type="match status" value="1"/>
</dbReference>
<dbReference type="FunFam" id="2.40.30.20:FF:000001">
    <property type="entry name" value="ATP synthase subunit alpha"/>
    <property type="match status" value="1"/>
</dbReference>
<dbReference type="FunFam" id="3.40.50.300:FF:002432">
    <property type="entry name" value="ATP synthase subunit alpha, mitochondrial"/>
    <property type="match status" value="1"/>
</dbReference>
<dbReference type="Gene3D" id="2.40.30.20">
    <property type="match status" value="1"/>
</dbReference>
<dbReference type="Gene3D" id="1.20.150.20">
    <property type="entry name" value="ATP synthase alpha/beta chain, C-terminal domain"/>
    <property type="match status" value="1"/>
</dbReference>
<dbReference type="Gene3D" id="3.40.50.300">
    <property type="entry name" value="P-loop containing nucleotide triphosphate hydrolases"/>
    <property type="match status" value="1"/>
</dbReference>
<dbReference type="HAMAP" id="MF_01346">
    <property type="entry name" value="ATP_synth_alpha_bact"/>
    <property type="match status" value="1"/>
</dbReference>
<dbReference type="InterPro" id="IPR023366">
    <property type="entry name" value="ATP_synth_asu-like_sf"/>
</dbReference>
<dbReference type="InterPro" id="IPR000793">
    <property type="entry name" value="ATP_synth_asu_C"/>
</dbReference>
<dbReference type="InterPro" id="IPR038376">
    <property type="entry name" value="ATP_synth_asu_C_sf"/>
</dbReference>
<dbReference type="InterPro" id="IPR033732">
    <property type="entry name" value="ATP_synth_F1_a_nt-bd_dom"/>
</dbReference>
<dbReference type="InterPro" id="IPR005294">
    <property type="entry name" value="ATP_synth_F1_asu"/>
</dbReference>
<dbReference type="InterPro" id="IPR020003">
    <property type="entry name" value="ATPase_a/bsu_AS"/>
</dbReference>
<dbReference type="InterPro" id="IPR004100">
    <property type="entry name" value="ATPase_F1/V1/A1_a/bsu_N"/>
</dbReference>
<dbReference type="InterPro" id="IPR036121">
    <property type="entry name" value="ATPase_F1/V1/A1_a/bsu_N_sf"/>
</dbReference>
<dbReference type="InterPro" id="IPR000194">
    <property type="entry name" value="ATPase_F1/V1/A1_a/bsu_nucl-bd"/>
</dbReference>
<dbReference type="InterPro" id="IPR027417">
    <property type="entry name" value="P-loop_NTPase"/>
</dbReference>
<dbReference type="NCBIfam" id="TIGR00962">
    <property type="entry name" value="atpA"/>
    <property type="match status" value="1"/>
</dbReference>
<dbReference type="NCBIfam" id="NF009884">
    <property type="entry name" value="PRK13343.1"/>
    <property type="match status" value="1"/>
</dbReference>
<dbReference type="PANTHER" id="PTHR48082">
    <property type="entry name" value="ATP SYNTHASE SUBUNIT ALPHA, MITOCHONDRIAL"/>
    <property type="match status" value="1"/>
</dbReference>
<dbReference type="PANTHER" id="PTHR48082:SF2">
    <property type="entry name" value="ATP SYNTHASE SUBUNIT ALPHA, MITOCHONDRIAL"/>
    <property type="match status" value="1"/>
</dbReference>
<dbReference type="Pfam" id="PF00006">
    <property type="entry name" value="ATP-synt_ab"/>
    <property type="match status" value="1"/>
</dbReference>
<dbReference type="Pfam" id="PF00306">
    <property type="entry name" value="ATP-synt_ab_C"/>
    <property type="match status" value="1"/>
</dbReference>
<dbReference type="Pfam" id="PF02874">
    <property type="entry name" value="ATP-synt_ab_N"/>
    <property type="match status" value="1"/>
</dbReference>
<dbReference type="PIRSF" id="PIRSF039088">
    <property type="entry name" value="F_ATPase_subunit_alpha"/>
    <property type="match status" value="1"/>
</dbReference>
<dbReference type="SUPFAM" id="SSF47917">
    <property type="entry name" value="C-terminal domain of alpha and beta subunits of F1 ATP synthase"/>
    <property type="match status" value="1"/>
</dbReference>
<dbReference type="SUPFAM" id="SSF50615">
    <property type="entry name" value="N-terminal domain of alpha and beta subunits of F1 ATP synthase"/>
    <property type="match status" value="1"/>
</dbReference>
<dbReference type="SUPFAM" id="SSF52540">
    <property type="entry name" value="P-loop containing nucleoside triphosphate hydrolases"/>
    <property type="match status" value="1"/>
</dbReference>
<dbReference type="PROSITE" id="PS00152">
    <property type="entry name" value="ATPASE_ALPHA_BETA"/>
    <property type="match status" value="1"/>
</dbReference>
<comment type="function">
    <text evidence="1">Produces ATP from ADP in the presence of a proton gradient across the membrane. The alpha chain is a regulatory subunit.</text>
</comment>
<comment type="catalytic activity">
    <reaction evidence="1">
        <text>ATP + H2O + 4 H(+)(in) = ADP + phosphate + 5 H(+)(out)</text>
        <dbReference type="Rhea" id="RHEA:57720"/>
        <dbReference type="ChEBI" id="CHEBI:15377"/>
        <dbReference type="ChEBI" id="CHEBI:15378"/>
        <dbReference type="ChEBI" id="CHEBI:30616"/>
        <dbReference type="ChEBI" id="CHEBI:43474"/>
        <dbReference type="ChEBI" id="CHEBI:456216"/>
        <dbReference type="EC" id="7.1.2.2"/>
    </reaction>
</comment>
<comment type="subunit">
    <text evidence="1">F-type ATPases have 2 components, CF(1) - the catalytic core - and CF(0) - the membrane proton channel. CF(1) has five subunits: alpha(3), beta(3), gamma(1), delta(1), epsilon(1). CF(0) has three main subunits: a(1), b(2) and c(9-12). The alpha and beta chains form an alternating ring which encloses part of the gamma chain. CF(1) is attached to CF(0) by a central stalk formed by the gamma and epsilon chains, while a peripheral stalk is formed by the delta and b chains.</text>
</comment>
<comment type="subcellular location">
    <subcellularLocation>
        <location evidence="1">Cell inner membrane</location>
        <topology evidence="1">Peripheral membrane protein</topology>
    </subcellularLocation>
</comment>
<comment type="similarity">
    <text evidence="1">Belongs to the ATPase alpha/beta chains family.</text>
</comment>
<gene>
    <name evidence="1" type="primary">atpA</name>
    <name type="ordered locus">Saro_2400</name>
</gene>
<evidence type="ECO:0000255" key="1">
    <source>
        <dbReference type="HAMAP-Rule" id="MF_01346"/>
    </source>
</evidence>
<protein>
    <recommendedName>
        <fullName evidence="1">ATP synthase subunit alpha</fullName>
        <ecNumber evidence="1">7.1.2.2</ecNumber>
    </recommendedName>
    <alternativeName>
        <fullName evidence="1">ATP synthase F1 sector subunit alpha</fullName>
    </alternativeName>
    <alternativeName>
        <fullName evidence="1">F-ATPase subunit alpha</fullName>
    </alternativeName>
</protein>
<reference key="1">
    <citation type="submission" date="2006-01" db="EMBL/GenBank/DDBJ databases">
        <title>Complete sequence of Novosphingobium aromaticivorans DSM 12444.</title>
        <authorList>
            <consortium name="US DOE Joint Genome Institute"/>
            <person name="Copeland A."/>
            <person name="Lucas S."/>
            <person name="Lapidus A."/>
            <person name="Barry K."/>
            <person name="Detter J.C."/>
            <person name="Glavina T."/>
            <person name="Hammon N."/>
            <person name="Israni S."/>
            <person name="Pitluck S."/>
            <person name="Chain P."/>
            <person name="Malfatti S."/>
            <person name="Shin M."/>
            <person name="Vergez L."/>
            <person name="Schmutz J."/>
            <person name="Larimer F."/>
            <person name="Land M."/>
            <person name="Kyrpides N."/>
            <person name="Ivanova N."/>
            <person name="Fredrickson J."/>
            <person name="Balkwill D."/>
            <person name="Romine M.F."/>
            <person name="Richardson P."/>
        </authorList>
    </citation>
    <scope>NUCLEOTIDE SEQUENCE [LARGE SCALE GENOMIC DNA]</scope>
    <source>
        <strain>ATCC 700278 / DSM 12444 / CCUG 56034 / CIP 105152 / NBRC 16084 / F199</strain>
    </source>
</reference>
<organism>
    <name type="scientific">Novosphingobium aromaticivorans (strain ATCC 700278 / DSM 12444 / CCUG 56034 / CIP 105152 / NBRC 16084 / F199)</name>
    <dbReference type="NCBI Taxonomy" id="279238"/>
    <lineage>
        <taxon>Bacteria</taxon>
        <taxon>Pseudomonadati</taxon>
        <taxon>Pseudomonadota</taxon>
        <taxon>Alphaproteobacteria</taxon>
        <taxon>Sphingomonadales</taxon>
        <taxon>Sphingomonadaceae</taxon>
        <taxon>Novosphingobium</taxon>
    </lineage>
</organism>
<feature type="chain" id="PRO_0000238309" description="ATP synthase subunit alpha">
    <location>
        <begin position="1"/>
        <end position="509"/>
    </location>
</feature>
<feature type="binding site" evidence="1">
    <location>
        <begin position="169"/>
        <end position="176"/>
    </location>
    <ligand>
        <name>ATP</name>
        <dbReference type="ChEBI" id="CHEBI:30616"/>
    </ligand>
</feature>
<feature type="site" description="Required for activity" evidence="1">
    <location>
        <position position="370"/>
    </location>
</feature>
<accession>Q2G5N7</accession>
<keyword id="KW-0066">ATP synthesis</keyword>
<keyword id="KW-0067">ATP-binding</keyword>
<keyword id="KW-0997">Cell inner membrane</keyword>
<keyword id="KW-1003">Cell membrane</keyword>
<keyword id="KW-0139">CF(1)</keyword>
<keyword id="KW-0375">Hydrogen ion transport</keyword>
<keyword id="KW-0406">Ion transport</keyword>
<keyword id="KW-0472">Membrane</keyword>
<keyword id="KW-0547">Nucleotide-binding</keyword>
<keyword id="KW-1185">Reference proteome</keyword>
<keyword id="KW-1278">Translocase</keyword>
<keyword id="KW-0813">Transport</keyword>